<feature type="chain" id="PRO_0000383585" description="UPF0751 protein DSY4013">
    <location>
        <begin position="1"/>
        <end position="102"/>
    </location>
</feature>
<accession>Q24Q90</accession>
<evidence type="ECO:0000305" key="1"/>
<protein>
    <recommendedName>
        <fullName>UPF0751 protein DSY4013</fullName>
    </recommendedName>
</protein>
<comment type="similarity">
    <text evidence="1">Belongs to the UPF0751 family.</text>
</comment>
<comment type="sequence caution" evidence="1">
    <conflict type="erroneous initiation">
        <sequence resource="EMBL-CDS" id="BAE85802"/>
    </conflict>
</comment>
<dbReference type="EMBL" id="AP008230">
    <property type="protein sequence ID" value="BAE85802.1"/>
    <property type="status" value="ALT_INIT"/>
    <property type="molecule type" value="Genomic_DNA"/>
</dbReference>
<dbReference type="RefSeq" id="WP_041272609.1">
    <property type="nucleotide sequence ID" value="NC_007907.1"/>
</dbReference>
<dbReference type="SMR" id="Q24Q90"/>
<dbReference type="STRING" id="138119.DSY4013"/>
<dbReference type="KEGG" id="dsy:DSY4013"/>
<dbReference type="HOGENOM" id="CLU_2286918_0_0_9"/>
<dbReference type="Proteomes" id="UP000001946">
    <property type="component" value="Chromosome"/>
</dbReference>
<dbReference type="InterPro" id="IPR016772">
    <property type="entry name" value="UCP020408"/>
</dbReference>
<dbReference type="Pfam" id="PF10087">
    <property type="entry name" value="DUF2325"/>
    <property type="match status" value="1"/>
</dbReference>
<reference key="1">
    <citation type="journal article" date="2006" name="J. Bacteriol.">
        <title>Complete genome sequence of the dehalorespiring bacterium Desulfitobacterium hafniense Y51 and comparison with Dehalococcoides ethenogenes 195.</title>
        <authorList>
            <person name="Nonaka H."/>
            <person name="Keresztes G."/>
            <person name="Shinoda Y."/>
            <person name="Ikenaga Y."/>
            <person name="Abe M."/>
            <person name="Naito K."/>
            <person name="Inatomi K."/>
            <person name="Furukawa K."/>
            <person name="Inui M."/>
            <person name="Yukawa H."/>
        </authorList>
    </citation>
    <scope>NUCLEOTIDE SEQUENCE [LARGE SCALE GENOMIC DNA]</scope>
    <source>
        <strain>Y51</strain>
    </source>
</reference>
<name>Y4013_DESHY</name>
<organism>
    <name type="scientific">Desulfitobacterium hafniense (strain Y51)</name>
    <dbReference type="NCBI Taxonomy" id="138119"/>
    <lineage>
        <taxon>Bacteria</taxon>
        <taxon>Bacillati</taxon>
        <taxon>Bacillota</taxon>
        <taxon>Clostridia</taxon>
        <taxon>Eubacteriales</taxon>
        <taxon>Desulfitobacteriaceae</taxon>
        <taxon>Desulfitobacterium</taxon>
    </lineage>
</organism>
<sequence length="102" mass="11299">MRIAIVGGQNHNQETYGKLLGKTGRVEIHFYDGIPKKHNKRNLEKLIKDVDLVIVILGACSHASMWDTKKAAKKCHKEVLFSRGIGISSIVKQIAGKLAYTA</sequence>
<gene>
    <name type="ordered locus">DSY4013</name>
</gene>
<keyword id="KW-1185">Reference proteome</keyword>
<proteinExistence type="inferred from homology"/>